<organismHost>
    <name type="scientific">Ctenopharyngodon idella</name>
    <name type="common">Grass carp</name>
    <name type="synonym">Leuciscus idella</name>
    <dbReference type="NCBI Taxonomy" id="7959"/>
</organismHost>
<organism>
    <name type="scientific">Aquareovirus G (isolate American grass carp/USA/PB01-155/-)</name>
    <name type="common">AQRV-G</name>
    <dbReference type="NCBI Taxonomy" id="648234"/>
    <lineage>
        <taxon>Viruses</taxon>
        <taxon>Riboviria</taxon>
        <taxon>Orthornavirae</taxon>
        <taxon>Duplornaviricota</taxon>
        <taxon>Resentoviricetes</taxon>
        <taxon>Reovirales</taxon>
        <taxon>Spinareoviridae</taxon>
        <taxon>Aquareovirus</taxon>
        <taxon>Aquareovirus graminis</taxon>
    </lineage>
</organism>
<protein>
    <recommendedName>
        <fullName>Non-structural protein 2</fullName>
        <shortName>NS2</shortName>
    </recommendedName>
</protein>
<accession>B2BNE8</accession>
<keyword id="KW-1185">Reference proteome</keyword>
<keyword id="KW-0694">RNA-binding</keyword>
<proteinExistence type="inferred from homology"/>
<reference key="1">
    <citation type="journal article" date="2008" name="Virology">
        <title>Complete characterisation of the American grass carp reovirus genome (genus Aquareovirus: family Reoviridae) reveals an evolutionary link between aquareoviruses and coltiviruses.</title>
        <authorList>
            <person name="Mohd Jaafar F."/>
            <person name="Goodwin A.E."/>
            <person name="Belhouchet M."/>
            <person name="Merry G."/>
            <person name="Fang Q."/>
            <person name="Cantaloube J.F."/>
            <person name="Biagini P."/>
            <person name="de Micco P."/>
            <person name="Mertens P.P."/>
            <person name="Attoui H."/>
        </authorList>
    </citation>
    <scope>NUCLEOTIDE SEQUENCE [GENOMIC RNA]</scope>
</reference>
<dbReference type="EMBL" id="EF589106">
    <property type="protein sequence ID" value="ABV01048.1"/>
    <property type="molecule type" value="Genomic_RNA"/>
</dbReference>
<dbReference type="RefSeq" id="YP_001837103.1">
    <property type="nucleotide sequence ID" value="NC_010592.1"/>
</dbReference>
<dbReference type="KEGG" id="vg:6218808"/>
<dbReference type="Proteomes" id="UP000001674">
    <property type="component" value="Genome"/>
</dbReference>
<dbReference type="GO" id="GO:0003968">
    <property type="term" value="F:RNA-directed RNA polymerase activity"/>
    <property type="evidence" value="ECO:0007669"/>
    <property type="project" value="InterPro"/>
</dbReference>
<dbReference type="GO" id="GO:0003727">
    <property type="term" value="F:single-stranded RNA binding"/>
    <property type="evidence" value="ECO:0007669"/>
    <property type="project" value="InterPro"/>
</dbReference>
<dbReference type="InterPro" id="IPR002507">
    <property type="entry name" value="Reovirus_polyG_pol"/>
</dbReference>
<dbReference type="Pfam" id="PF01518">
    <property type="entry name" value="PolyG_pol"/>
    <property type="match status" value="1"/>
</dbReference>
<evidence type="ECO:0000250" key="1"/>
<evidence type="ECO:0000305" key="2"/>
<gene>
    <name type="primary">S9</name>
</gene>
<comment type="function">
    <text evidence="1">Protein that binds to ssRNA and may be involved in genome packaging.</text>
</comment>
<comment type="subunit">
    <text evidence="1">Homomultimer.</text>
</comment>
<comment type="similarity">
    <text evidence="2">Belongs to the aquareoviridae NS2 protein family.</text>
</comment>
<name>VNS2_AQRVG</name>
<feature type="chain" id="PRO_0000404177" description="Non-structural protein 2">
    <location>
        <begin position="1"/>
        <end position="350"/>
    </location>
</feature>
<sequence length="350" mass="37921">MAHLNAATLINAERSDCSLRLLENFPSLTITVRQDTSGRDLVASTYSATGMSAAARNLNPLANFRHMRQPGYLRPPHTALKPLPLRTAIMNGYESLTRHNGQIQVTPGLRELIKECAPELHESILPATVQHITPLSLATRLSMVCAGLHCDDLVETRPVTTSLTVAFTTKVLILAVDPDEAKLAVNARGADHLLTVDGASTILTNFGYDIRGNVRRDAPQALSPSDLPDCYPVLWLGAVAGLIAVQLETDLDQLGMNLTEQKTLTAHPPAVDAFMRKLQSFALLSSRLFHLCVAHALEPFRDMAALLRVWQAPTLVQIPEVSLAIKGPSIEVQGNGTQLFQVRAAPIGGM</sequence>